<dbReference type="EMBL" id="AK029150">
    <property type="protein sequence ID" value="BAC26327.1"/>
    <property type="molecule type" value="mRNA"/>
</dbReference>
<dbReference type="EMBL" id="AK147118">
    <property type="protein sequence ID" value="BAE27690.1"/>
    <property type="molecule type" value="mRNA"/>
</dbReference>
<dbReference type="EMBL" id="AK150332">
    <property type="protein sequence ID" value="BAE29474.1"/>
    <property type="molecule type" value="mRNA"/>
</dbReference>
<dbReference type="EMBL" id="AK151031">
    <property type="protein sequence ID" value="BAE30048.1"/>
    <property type="molecule type" value="mRNA"/>
</dbReference>
<dbReference type="EMBL" id="AK152941">
    <property type="protein sequence ID" value="BAE31612.1"/>
    <property type="molecule type" value="mRNA"/>
</dbReference>
<dbReference type="EMBL" id="AK166753">
    <property type="protein sequence ID" value="BAE38994.1"/>
    <property type="molecule type" value="mRNA"/>
</dbReference>
<dbReference type="EMBL" id="AC140233">
    <property type="status" value="NOT_ANNOTATED_CDS"/>
    <property type="molecule type" value="Genomic_DNA"/>
</dbReference>
<dbReference type="EMBL" id="AK129040">
    <property type="protein sequence ID" value="BAC97850.1"/>
    <property type="molecule type" value="mRNA"/>
</dbReference>
<dbReference type="CCDS" id="CCDS38006.1">
    <molecule id="E9Q5C9-1"/>
</dbReference>
<dbReference type="RefSeq" id="NP_001034440.1">
    <property type="nucleotide sequence ID" value="NM_001039351.2"/>
</dbReference>
<dbReference type="RefSeq" id="NP_001034441.1">
    <molecule id="E9Q5C9-1"/>
    <property type="nucleotide sequence ID" value="NM_001039352.2"/>
</dbReference>
<dbReference type="RefSeq" id="NP_001034442.1">
    <property type="nucleotide sequence ID" value="NM_001039353.2"/>
</dbReference>
<dbReference type="RefSeq" id="NP_444316.2">
    <property type="nucleotide sequence ID" value="NM_053086.3"/>
</dbReference>
<dbReference type="SMR" id="E9Q5C9"/>
<dbReference type="FunCoup" id="E9Q5C9">
    <property type="interactions" value="2354"/>
</dbReference>
<dbReference type="IntAct" id="E9Q5C9">
    <property type="interactions" value="1"/>
</dbReference>
<dbReference type="STRING" id="10090.ENSMUSP00000128331"/>
<dbReference type="GlyGen" id="E9Q5C9">
    <property type="glycosylation" value="1 site, 1 O-linked glycan (1 site)"/>
</dbReference>
<dbReference type="iPTMnet" id="E9Q5C9"/>
<dbReference type="PhosphoSitePlus" id="E9Q5C9"/>
<dbReference type="jPOST" id="E9Q5C9"/>
<dbReference type="PaxDb" id="10090-ENSMUSP00000128331"/>
<dbReference type="PeptideAtlas" id="E9Q5C9"/>
<dbReference type="ProteomicsDB" id="293698">
    <molecule id="E9Q5C9-1"/>
</dbReference>
<dbReference type="ProteomicsDB" id="293699">
    <molecule id="E9Q5C9-2"/>
</dbReference>
<dbReference type="Pumba" id="E9Q5C9"/>
<dbReference type="Antibodypedia" id="31392">
    <property type="antibodies" value="289 antibodies from 32 providers"/>
</dbReference>
<dbReference type="DNASU" id="70769"/>
<dbReference type="Ensembl" id="ENSMUST00000165017.2">
    <molecule id="E9Q5C9-1"/>
    <property type="protein sequence ID" value="ENSMUSP00000128331.2"/>
    <property type="gene ID" value="ENSMUSG00000015176.12"/>
</dbReference>
<dbReference type="Ensembl" id="ENSMUST00000235620.2">
    <molecule id="E9Q5C9-1"/>
    <property type="protein sequence ID" value="ENSMUSP00000157687.2"/>
    <property type="gene ID" value="ENSMUSG00000015176.12"/>
</dbReference>
<dbReference type="GeneID" id="70769"/>
<dbReference type="KEGG" id="mmu:70769"/>
<dbReference type="UCSC" id="uc008hsh.3">
    <molecule id="E9Q5C9-1"/>
    <property type="organism name" value="mouse"/>
</dbReference>
<dbReference type="AGR" id="MGI:1918019"/>
<dbReference type="CTD" id="9221"/>
<dbReference type="MGI" id="MGI:1918019">
    <property type="gene designation" value="Nolc1"/>
</dbReference>
<dbReference type="VEuPathDB" id="HostDB:ENSMUSG00000015176"/>
<dbReference type="eggNOG" id="KOG2992">
    <property type="taxonomic scope" value="Eukaryota"/>
</dbReference>
<dbReference type="GeneTree" id="ENSGT00730000111092"/>
<dbReference type="HOGENOM" id="CLU_014527_0_0_1"/>
<dbReference type="InParanoid" id="E9Q5C9"/>
<dbReference type="OMA" id="TWETNKN"/>
<dbReference type="OrthoDB" id="5599646at2759"/>
<dbReference type="TreeFam" id="TF341730"/>
<dbReference type="BioGRID-ORCS" id="70769">
    <property type="hits" value="13 hits in 77 CRISPR screens"/>
</dbReference>
<dbReference type="ChiTaRS" id="Nolc1">
    <property type="organism name" value="mouse"/>
</dbReference>
<dbReference type="PRO" id="PR:E9Q5C9"/>
<dbReference type="Proteomes" id="UP000000589">
    <property type="component" value="Chromosome 19"/>
</dbReference>
<dbReference type="RNAct" id="E9Q5C9">
    <property type="molecule type" value="protein"/>
</dbReference>
<dbReference type="Bgee" id="ENSMUSG00000015176">
    <property type="expression patterns" value="Expressed in blastoderm cell in morula and 263 other cell types or tissues"/>
</dbReference>
<dbReference type="ExpressionAtlas" id="E9Q5C9">
    <property type="expression patterns" value="baseline and differential"/>
</dbReference>
<dbReference type="GO" id="GO:0015030">
    <property type="term" value="C:Cajal body"/>
    <property type="evidence" value="ECO:0000314"/>
    <property type="project" value="MGI"/>
</dbReference>
<dbReference type="GO" id="GO:0005737">
    <property type="term" value="C:cytoplasm"/>
    <property type="evidence" value="ECO:0007669"/>
    <property type="project" value="UniProtKB-SubCell"/>
</dbReference>
<dbReference type="GO" id="GO:0001650">
    <property type="term" value="C:fibrillar center"/>
    <property type="evidence" value="ECO:0007669"/>
    <property type="project" value="Ensembl"/>
</dbReference>
<dbReference type="GO" id="GO:0005730">
    <property type="term" value="C:nucleolus"/>
    <property type="evidence" value="ECO:0000314"/>
    <property type="project" value="MGI"/>
</dbReference>
<dbReference type="GO" id="GO:0005654">
    <property type="term" value="C:nucleoplasm"/>
    <property type="evidence" value="ECO:0000314"/>
    <property type="project" value="MGI"/>
</dbReference>
<dbReference type="GO" id="GO:0030532">
    <property type="term" value="C:small nuclear ribonucleoprotein complex"/>
    <property type="evidence" value="ECO:0000304"/>
    <property type="project" value="MGI"/>
</dbReference>
<dbReference type="GO" id="GO:0046982">
    <property type="term" value="F:protein heterodimerization activity"/>
    <property type="evidence" value="ECO:0007669"/>
    <property type="project" value="Ensembl"/>
</dbReference>
<dbReference type="GO" id="GO:0004860">
    <property type="term" value="F:protein kinase inhibitor activity"/>
    <property type="evidence" value="ECO:0000266"/>
    <property type="project" value="MGI"/>
</dbReference>
<dbReference type="GO" id="GO:0030674">
    <property type="term" value="F:protein-macromolecule adaptor activity"/>
    <property type="evidence" value="ECO:0007669"/>
    <property type="project" value="Ensembl"/>
</dbReference>
<dbReference type="GO" id="GO:0014032">
    <property type="term" value="P:neural crest cell development"/>
    <property type="evidence" value="ECO:0000250"/>
    <property type="project" value="UniProtKB"/>
</dbReference>
<dbReference type="GO" id="GO:0014029">
    <property type="term" value="P:neural crest formation"/>
    <property type="evidence" value="ECO:0000250"/>
    <property type="project" value="UniProtKB"/>
</dbReference>
<dbReference type="GO" id="GO:0007000">
    <property type="term" value="P:nucleolus organization"/>
    <property type="evidence" value="ECO:0000314"/>
    <property type="project" value="MGI"/>
</dbReference>
<dbReference type="GO" id="GO:0006417">
    <property type="term" value="P:regulation of translation"/>
    <property type="evidence" value="ECO:0000250"/>
    <property type="project" value="UniProtKB"/>
</dbReference>
<dbReference type="InterPro" id="IPR006594">
    <property type="entry name" value="LisH"/>
</dbReference>
<dbReference type="InterPro" id="IPR039191">
    <property type="entry name" value="Nopp140-like"/>
</dbReference>
<dbReference type="InterPro" id="IPR007718">
    <property type="entry name" value="Srp40_C"/>
</dbReference>
<dbReference type="PANTHER" id="PTHR23216">
    <property type="entry name" value="NUCLEOLAR AND COILED-BODY PHOSPHOPROTEIN 1"/>
    <property type="match status" value="1"/>
</dbReference>
<dbReference type="PANTHER" id="PTHR23216:SF1">
    <property type="entry name" value="NUCLEOLAR AND COILED-BODY PHOSPHOPROTEIN 1"/>
    <property type="match status" value="1"/>
</dbReference>
<dbReference type="Pfam" id="PF05022">
    <property type="entry name" value="SRP40_C"/>
    <property type="match status" value="1"/>
</dbReference>
<dbReference type="PROSITE" id="PS50896">
    <property type="entry name" value="LISH"/>
    <property type="match status" value="1"/>
</dbReference>
<organism>
    <name type="scientific">Mus musculus</name>
    <name type="common">Mouse</name>
    <dbReference type="NCBI Taxonomy" id="10090"/>
    <lineage>
        <taxon>Eukaryota</taxon>
        <taxon>Metazoa</taxon>
        <taxon>Chordata</taxon>
        <taxon>Craniata</taxon>
        <taxon>Vertebrata</taxon>
        <taxon>Euteleostomi</taxon>
        <taxon>Mammalia</taxon>
        <taxon>Eutheria</taxon>
        <taxon>Euarchontoglires</taxon>
        <taxon>Glires</taxon>
        <taxon>Rodentia</taxon>
        <taxon>Myomorpha</taxon>
        <taxon>Muroidea</taxon>
        <taxon>Muridae</taxon>
        <taxon>Murinae</taxon>
        <taxon>Mus</taxon>
        <taxon>Mus</taxon>
    </lineage>
</organism>
<gene>
    <name evidence="11" type="primary">Nolc1</name>
    <name evidence="9" type="synonym">Kiaa0035</name>
</gene>
<keyword id="KW-0007">Acetylation</keyword>
<keyword id="KW-0025">Alternative splicing</keyword>
<keyword id="KW-0963">Cytoplasm</keyword>
<keyword id="KW-1017">Isopeptide bond</keyword>
<keyword id="KW-0488">Methylation</keyword>
<keyword id="KW-0539">Nucleus</keyword>
<keyword id="KW-0597">Phosphoprotein</keyword>
<keyword id="KW-1185">Reference proteome</keyword>
<keyword id="KW-0677">Repeat</keyword>
<keyword id="KW-0832">Ubl conjugation</keyword>
<protein>
    <recommendedName>
        <fullName evidence="10">Nucleolar and coiled-body phosphoprotein 1</fullName>
    </recommendedName>
    <alternativeName>
        <fullName evidence="8">140 kDa nucleolar phosphoprotein</fullName>
        <shortName evidence="8">Nopp140</shortName>
    </alternativeName>
</protein>
<name>NOLC1_MOUSE</name>
<proteinExistence type="evidence at protein level"/>
<reference key="1">
    <citation type="journal article" date="2005" name="Science">
        <title>The transcriptional landscape of the mammalian genome.</title>
        <authorList>
            <person name="Carninci P."/>
            <person name="Kasukawa T."/>
            <person name="Katayama S."/>
            <person name="Gough J."/>
            <person name="Frith M.C."/>
            <person name="Maeda N."/>
            <person name="Oyama R."/>
            <person name="Ravasi T."/>
            <person name="Lenhard B."/>
            <person name="Wells C."/>
            <person name="Kodzius R."/>
            <person name="Shimokawa K."/>
            <person name="Bajic V.B."/>
            <person name="Brenner S.E."/>
            <person name="Batalov S."/>
            <person name="Forrest A.R."/>
            <person name="Zavolan M."/>
            <person name="Davis M.J."/>
            <person name="Wilming L.G."/>
            <person name="Aidinis V."/>
            <person name="Allen J.E."/>
            <person name="Ambesi-Impiombato A."/>
            <person name="Apweiler R."/>
            <person name="Aturaliya R.N."/>
            <person name="Bailey T.L."/>
            <person name="Bansal M."/>
            <person name="Baxter L."/>
            <person name="Beisel K.W."/>
            <person name="Bersano T."/>
            <person name="Bono H."/>
            <person name="Chalk A.M."/>
            <person name="Chiu K.P."/>
            <person name="Choudhary V."/>
            <person name="Christoffels A."/>
            <person name="Clutterbuck D.R."/>
            <person name="Crowe M.L."/>
            <person name="Dalla E."/>
            <person name="Dalrymple B.P."/>
            <person name="de Bono B."/>
            <person name="Della Gatta G."/>
            <person name="di Bernardo D."/>
            <person name="Down T."/>
            <person name="Engstrom P."/>
            <person name="Fagiolini M."/>
            <person name="Faulkner G."/>
            <person name="Fletcher C.F."/>
            <person name="Fukushima T."/>
            <person name="Furuno M."/>
            <person name="Futaki S."/>
            <person name="Gariboldi M."/>
            <person name="Georgii-Hemming P."/>
            <person name="Gingeras T.R."/>
            <person name="Gojobori T."/>
            <person name="Green R.E."/>
            <person name="Gustincich S."/>
            <person name="Harbers M."/>
            <person name="Hayashi Y."/>
            <person name="Hensch T.K."/>
            <person name="Hirokawa N."/>
            <person name="Hill D."/>
            <person name="Huminiecki L."/>
            <person name="Iacono M."/>
            <person name="Ikeo K."/>
            <person name="Iwama A."/>
            <person name="Ishikawa T."/>
            <person name="Jakt M."/>
            <person name="Kanapin A."/>
            <person name="Katoh M."/>
            <person name="Kawasawa Y."/>
            <person name="Kelso J."/>
            <person name="Kitamura H."/>
            <person name="Kitano H."/>
            <person name="Kollias G."/>
            <person name="Krishnan S.P."/>
            <person name="Kruger A."/>
            <person name="Kummerfeld S.K."/>
            <person name="Kurochkin I.V."/>
            <person name="Lareau L.F."/>
            <person name="Lazarevic D."/>
            <person name="Lipovich L."/>
            <person name="Liu J."/>
            <person name="Liuni S."/>
            <person name="McWilliam S."/>
            <person name="Madan Babu M."/>
            <person name="Madera M."/>
            <person name="Marchionni L."/>
            <person name="Matsuda H."/>
            <person name="Matsuzawa S."/>
            <person name="Miki H."/>
            <person name="Mignone F."/>
            <person name="Miyake S."/>
            <person name="Morris K."/>
            <person name="Mottagui-Tabar S."/>
            <person name="Mulder N."/>
            <person name="Nakano N."/>
            <person name="Nakauchi H."/>
            <person name="Ng P."/>
            <person name="Nilsson R."/>
            <person name="Nishiguchi S."/>
            <person name="Nishikawa S."/>
            <person name="Nori F."/>
            <person name="Ohara O."/>
            <person name="Okazaki Y."/>
            <person name="Orlando V."/>
            <person name="Pang K.C."/>
            <person name="Pavan W.J."/>
            <person name="Pavesi G."/>
            <person name="Pesole G."/>
            <person name="Petrovsky N."/>
            <person name="Piazza S."/>
            <person name="Reed J."/>
            <person name="Reid J.F."/>
            <person name="Ring B.Z."/>
            <person name="Ringwald M."/>
            <person name="Rost B."/>
            <person name="Ruan Y."/>
            <person name="Salzberg S.L."/>
            <person name="Sandelin A."/>
            <person name="Schneider C."/>
            <person name="Schoenbach C."/>
            <person name="Sekiguchi K."/>
            <person name="Semple C.A."/>
            <person name="Seno S."/>
            <person name="Sessa L."/>
            <person name="Sheng Y."/>
            <person name="Shibata Y."/>
            <person name="Shimada H."/>
            <person name="Shimada K."/>
            <person name="Silva D."/>
            <person name="Sinclair B."/>
            <person name="Sperling S."/>
            <person name="Stupka E."/>
            <person name="Sugiura K."/>
            <person name="Sultana R."/>
            <person name="Takenaka Y."/>
            <person name="Taki K."/>
            <person name="Tammoja K."/>
            <person name="Tan S.L."/>
            <person name="Tang S."/>
            <person name="Taylor M.S."/>
            <person name="Tegner J."/>
            <person name="Teichmann S.A."/>
            <person name="Ueda H.R."/>
            <person name="van Nimwegen E."/>
            <person name="Verardo R."/>
            <person name="Wei C.L."/>
            <person name="Yagi K."/>
            <person name="Yamanishi H."/>
            <person name="Zabarovsky E."/>
            <person name="Zhu S."/>
            <person name="Zimmer A."/>
            <person name="Hide W."/>
            <person name="Bult C."/>
            <person name="Grimmond S.M."/>
            <person name="Teasdale R.D."/>
            <person name="Liu E.T."/>
            <person name="Brusic V."/>
            <person name="Quackenbush J."/>
            <person name="Wahlestedt C."/>
            <person name="Mattick J.S."/>
            <person name="Hume D.A."/>
            <person name="Kai C."/>
            <person name="Sasaki D."/>
            <person name="Tomaru Y."/>
            <person name="Fukuda S."/>
            <person name="Kanamori-Katayama M."/>
            <person name="Suzuki M."/>
            <person name="Aoki J."/>
            <person name="Arakawa T."/>
            <person name="Iida J."/>
            <person name="Imamura K."/>
            <person name="Itoh M."/>
            <person name="Kato T."/>
            <person name="Kawaji H."/>
            <person name="Kawagashira N."/>
            <person name="Kawashima T."/>
            <person name="Kojima M."/>
            <person name="Kondo S."/>
            <person name="Konno H."/>
            <person name="Nakano K."/>
            <person name="Ninomiya N."/>
            <person name="Nishio T."/>
            <person name="Okada M."/>
            <person name="Plessy C."/>
            <person name="Shibata K."/>
            <person name="Shiraki T."/>
            <person name="Suzuki S."/>
            <person name="Tagami M."/>
            <person name="Waki K."/>
            <person name="Watahiki A."/>
            <person name="Okamura-Oho Y."/>
            <person name="Suzuki H."/>
            <person name="Kawai J."/>
            <person name="Hayashizaki Y."/>
        </authorList>
    </citation>
    <scope>NUCLEOTIDE SEQUENCE [LARGE SCALE MRNA] (ISOFORMS 1 AND 2)</scope>
    <source>
        <strain>C57BL/6J</strain>
        <tissue>Amnion</tissue>
        <tissue>Skin</tissue>
    </source>
</reference>
<reference key="2">
    <citation type="journal article" date="2009" name="PLoS Biol.">
        <title>Lineage-specific biology revealed by a finished genome assembly of the mouse.</title>
        <authorList>
            <person name="Church D.M."/>
            <person name="Goodstadt L."/>
            <person name="Hillier L.W."/>
            <person name="Zody M.C."/>
            <person name="Goldstein S."/>
            <person name="She X."/>
            <person name="Bult C.J."/>
            <person name="Agarwala R."/>
            <person name="Cherry J.L."/>
            <person name="DiCuccio M."/>
            <person name="Hlavina W."/>
            <person name="Kapustin Y."/>
            <person name="Meric P."/>
            <person name="Maglott D."/>
            <person name="Birtle Z."/>
            <person name="Marques A.C."/>
            <person name="Graves T."/>
            <person name="Zhou S."/>
            <person name="Teague B."/>
            <person name="Potamousis K."/>
            <person name="Churas C."/>
            <person name="Place M."/>
            <person name="Herschleb J."/>
            <person name="Runnheim R."/>
            <person name="Forrest D."/>
            <person name="Amos-Landgraf J."/>
            <person name="Schwartz D.C."/>
            <person name="Cheng Z."/>
            <person name="Lindblad-Toh K."/>
            <person name="Eichler E.E."/>
            <person name="Ponting C.P."/>
        </authorList>
    </citation>
    <scope>NUCLEOTIDE SEQUENCE [LARGE SCALE GENOMIC DNA]</scope>
    <source>
        <strain>C57BL/6J</strain>
    </source>
</reference>
<reference key="3">
    <citation type="journal article" date="2003" name="DNA Res.">
        <title>Prediction of the coding sequences of mouse homologues of KIAA gene: III. The complete nucleotide sequences of 500 mouse KIAA-homologous cDNAs identified by screening of terminal sequences of cDNA clones randomly sampled from size-fractionated libraries.</title>
        <authorList>
            <person name="Okazaki N."/>
            <person name="Kikuno R."/>
            <person name="Ohara R."/>
            <person name="Inamoto S."/>
            <person name="Koseki H."/>
            <person name="Hiraoka S."/>
            <person name="Saga Y."/>
            <person name="Nagase T."/>
            <person name="Ohara O."/>
            <person name="Koga H."/>
        </authorList>
    </citation>
    <scope>NUCLEOTIDE SEQUENCE [LARGE SCALE MRNA] OF 2-702 (ISOFORM 1)</scope>
    <source>
        <tissue>Embryonic tail</tissue>
    </source>
</reference>
<reference key="4">
    <citation type="journal article" date="2001" name="Mol. Reprod. Dev.">
        <title>Nopp 140 involvement in nucleologenesis of mouse preimplantation embryos.</title>
        <authorList>
            <person name="Baran V."/>
            <person name="Brochard V."/>
            <person name="Renard J.P."/>
            <person name="Flechon J.E."/>
        </authorList>
    </citation>
    <scope>FUNCTION</scope>
</reference>
<reference key="5">
    <citation type="journal article" date="2009" name="Immunity">
        <title>The phagosomal proteome in interferon-gamma-activated macrophages.</title>
        <authorList>
            <person name="Trost M."/>
            <person name="English L."/>
            <person name="Lemieux S."/>
            <person name="Courcelles M."/>
            <person name="Desjardins M."/>
            <person name="Thibault P."/>
        </authorList>
    </citation>
    <scope>PHOSPHORYLATION [LARGE SCALE ANALYSIS] AT SER-563; SER-646 AND SER-701</scope>
    <scope>IDENTIFICATION BY MASS SPECTROMETRY [LARGE SCALE ANALYSIS]</scope>
</reference>
<reference key="6">
    <citation type="journal article" date="2009" name="Mol. Cell. Proteomics">
        <title>Large scale localization of protein phosphorylation by use of electron capture dissociation mass spectrometry.</title>
        <authorList>
            <person name="Sweet S.M."/>
            <person name="Bailey C.M."/>
            <person name="Cunningham D.L."/>
            <person name="Heath J.K."/>
            <person name="Cooper H.J."/>
        </authorList>
    </citation>
    <scope>PHOSPHORYLATION [LARGE SCALE ANALYSIS] AT SER-563 AND SER-701</scope>
    <scope>IDENTIFICATION BY MASS SPECTROMETRY [LARGE SCALE ANALYSIS]</scope>
    <source>
        <tissue>Embryonic fibroblast</tissue>
    </source>
</reference>
<reference key="7">
    <citation type="journal article" date="2010" name="Cell">
        <title>A tissue-specific atlas of mouse protein phosphorylation and expression.</title>
        <authorList>
            <person name="Huttlin E.L."/>
            <person name="Jedrychowski M.P."/>
            <person name="Elias J.E."/>
            <person name="Goswami T."/>
            <person name="Rad R."/>
            <person name="Beausoleil S.A."/>
            <person name="Villen J."/>
            <person name="Haas W."/>
            <person name="Sowa M.E."/>
            <person name="Gygi S.P."/>
        </authorList>
    </citation>
    <scope>PHOSPHORYLATION [LARGE SCALE ANALYSIS] AT SER-563; THR-594; THR-610; SER-646; SER-689 AND SER-701</scope>
    <scope>IDENTIFICATION BY MASS SPECTROMETRY [LARGE SCALE ANALYSIS]</scope>
    <source>
        <tissue>Brain</tissue>
        <tissue>Brown adipose tissue</tissue>
        <tissue>Heart</tissue>
        <tissue>Kidney</tissue>
        <tissue>Liver</tissue>
        <tissue>Lung</tissue>
        <tissue>Pancreas</tissue>
        <tissue>Spleen</tissue>
        <tissue>Testis</tissue>
    </source>
</reference>
<reference key="8">
    <citation type="journal article" date="2013" name="Mol. Cell">
        <title>SIRT5-mediated lysine desuccinylation impacts diverse metabolic pathways.</title>
        <authorList>
            <person name="Park J."/>
            <person name="Chen Y."/>
            <person name="Tishkoff D.X."/>
            <person name="Peng C."/>
            <person name="Tan M."/>
            <person name="Dai L."/>
            <person name="Xie Z."/>
            <person name="Zhang Y."/>
            <person name="Zwaans B.M."/>
            <person name="Skinner M.E."/>
            <person name="Lombard D.B."/>
            <person name="Zhao Y."/>
        </authorList>
    </citation>
    <scope>ACETYLATION [LARGE SCALE ANALYSIS] AT LYS-33 AND LYS-666</scope>
    <scope>IDENTIFICATION BY MASS SPECTROMETRY [LARGE SCALE ANALYSIS]</scope>
    <source>
        <tissue>Embryonic fibroblast</tissue>
    </source>
</reference>
<reference key="9">
    <citation type="journal article" date="2004" name="Science">
        <title>Phosphorylation of proteins by inositol pyrophosphates.</title>
        <authorList>
            <person name="Saiardi A."/>
            <person name="Bhandari R."/>
            <person name="Resnick A.C."/>
            <person name="Snowman A.M."/>
            <person name="Snyder S.H."/>
        </authorList>
    </citation>
    <scope>PYROPHOSPHORYLATION</scope>
    <scope>MUTAGENESIS OF 77-LYS--LYS-98; 84-SER--SER-89 AND 87-ASP--ASP-97</scope>
</reference>
<reference key="10">
    <citation type="journal article" date="2007" name="Proc. Natl. Acad. Sci. U.S.A.">
        <title>Protein pyrophosphorylation by inositol pyrophosphates is a posttranslational event.</title>
        <authorList>
            <person name="Bhandari R."/>
            <person name="Saiardi A."/>
            <person name="Ahmadibeni Y."/>
            <person name="Snowman A.M."/>
            <person name="Resnick A.C."/>
            <person name="Kristiansen T.Z."/>
            <person name="Molina H."/>
            <person name="Pandey A."/>
            <person name="Werner J.K. Jr."/>
            <person name="Juluri K.R."/>
            <person name="Xu Y."/>
            <person name="Prestwich G.D."/>
            <person name="Parang K."/>
            <person name="Snyder S.H."/>
        </authorList>
    </citation>
    <scope>PYROPHOSPHORYLATION AT SER-89 AND SER-92</scope>
    <scope>PHOSPHORYLATION AT SER-89 AND SER-92</scope>
    <scope>MUTAGENESIS OF THR-83</scope>
</reference>
<accession>E9Q5C9</accession>
<accession>Q3TKZ9</accession>
<accession>Q3U6W2</accession>
<accession>Q3UBB6</accession>
<accession>Q3UI16</accession>
<accession>Q6ZQK6</accession>
<accession>Q8CE21</accession>
<evidence type="ECO:0000250" key="1">
    <source>
        <dbReference type="UniProtKB" id="P41777"/>
    </source>
</evidence>
<evidence type="ECO:0000250" key="2">
    <source>
        <dbReference type="UniProtKB" id="Q14978"/>
    </source>
</evidence>
<evidence type="ECO:0000255" key="3">
    <source>
        <dbReference type="PROSITE-ProRule" id="PRU00126"/>
    </source>
</evidence>
<evidence type="ECO:0000256" key="4">
    <source>
        <dbReference type="SAM" id="MobiDB-lite"/>
    </source>
</evidence>
<evidence type="ECO:0000269" key="5">
    <source>
    </source>
</evidence>
<evidence type="ECO:0000269" key="6">
    <source>
    </source>
</evidence>
<evidence type="ECO:0000269" key="7">
    <source>
    </source>
</evidence>
<evidence type="ECO:0000303" key="8">
    <source>
    </source>
</evidence>
<evidence type="ECO:0000303" key="9">
    <source>
    </source>
</evidence>
<evidence type="ECO:0000305" key="10"/>
<evidence type="ECO:0000312" key="11">
    <source>
        <dbReference type="MGI" id="MGI:1918019"/>
    </source>
</evidence>
<evidence type="ECO:0007744" key="12">
    <source>
    </source>
</evidence>
<evidence type="ECO:0007744" key="13">
    <source>
    </source>
</evidence>
<evidence type="ECO:0007744" key="14">
    <source>
    </source>
</evidence>
<evidence type="ECO:0007744" key="15">
    <source>
    </source>
</evidence>
<comment type="function">
    <text evidence="2 5">Nucleolar protein that acts as a regulator of RNA polymerase I by connecting RNA polymerase I with enzymes responsible for ribosomal processing and modification (By similarity). Required for neural crest specification: following monoubiquitination by the BCR(KBTBD8) complex, associates with TCOF1 and acts as a platform to connect RNA polymerase I with enzymes responsible for ribosomal processing and modification, leading to remodel the translational program of differentiating cells in favor of neural crest specification (By similarity). Involved in nucleologenesis, possibly by playing a role in the maintenance of the fundamental structure of the fibrillar center and dense fibrillar component in the nucleolus (PubMed:11424213). It has intrinsic GTPase and ATPase activities (By similarity).</text>
</comment>
<comment type="subunit">
    <text evidence="1 2">Interacts with RNA polymerase I 194 kDa subunit (RPA194) and with casein kinase-II (By similarity). Interacts with DKC1/NAP57, NOP58 and fibrillarin (By similarity).</text>
</comment>
<comment type="subcellular location">
    <subcellularLocation>
        <location evidence="2">Nucleus</location>
        <location evidence="2">Nucleolus</location>
    </subcellularLocation>
    <subcellularLocation>
        <location evidence="2">Cytoplasm</location>
    </subcellularLocation>
    <text evidence="2">Shuttles between the nucleolus and the cytoplasm. At telophase it begins to assemble into granular-like pre-nucleolar bodies which are subsequently relocated to nucleoli at the early G1-phase.</text>
</comment>
<comment type="alternative products">
    <event type="alternative splicing"/>
    <isoform>
        <id>E9Q5C9-1</id>
        <name>1</name>
        <sequence type="displayed"/>
    </isoform>
    <isoform>
        <id>E9Q5C9-2</id>
        <name>2</name>
        <sequence type="described" ref="VSP_058892 VSP_058893"/>
    </isoform>
</comment>
<comment type="PTM">
    <text evidence="2">Undergoes rapid and massive phosphorylation/dephosphorylation cycles on CK2 and PKC sites. NOLC1 is one of the mostly phosphorylated proteins in the cell.</text>
</comment>
<comment type="PTM">
    <text evidence="6 7">Pyrophosphorylated by 5-diphosphoinositol pentakisphosphate (5-IP7) (PubMed:15604408). Serine pyrophosphorylation is achieved by Mg(2+)-dependent, but enzyme independent transfer of a beta-phosphate from a inositol pyrophosphate to a pre-phosphorylated serine residue (PubMed:15604408, PubMed:17873058).</text>
</comment>
<comment type="PTM">
    <text evidence="2">Ubiquitinated. Monoubiquitination by the BCR(KBTBD8) complex promotes the formation of a NOLC1-TCOF1 complex that acts as a platform to connect RNA polymerase I with enzymes responsible for ribosomal processing and modification, leading to remodel the translational program of differentiating cells in favor of neural crest specification.</text>
</comment>
<comment type="similarity">
    <text evidence="10">Belongs to the NOLC1 family.</text>
</comment>
<feature type="chain" id="PRO_0000439641" description="Nucleolar and coiled-body phosphoprotein 1">
    <location>
        <begin position="1"/>
        <end position="702"/>
    </location>
</feature>
<feature type="domain" description="LisH" evidence="3">
    <location>
        <begin position="10"/>
        <end position="42"/>
    </location>
</feature>
<feature type="repeat" description="Acidic serine cluster 1" evidence="2">
    <location>
        <begin position="85"/>
        <end position="96"/>
    </location>
</feature>
<feature type="repeat" description="Acidic serine cluster 2" evidence="2">
    <location>
        <begin position="130"/>
        <end position="141"/>
    </location>
</feature>
<feature type="repeat" description="Acidic serine cluster 3" evidence="2">
    <location>
        <begin position="176"/>
        <end position="187"/>
    </location>
</feature>
<feature type="repeat" description="Acidic serine cluster 4" evidence="2">
    <location>
        <begin position="232"/>
        <end position="241"/>
    </location>
</feature>
<feature type="repeat" description="Acidic serine cluster 5" evidence="2">
    <location>
        <begin position="273"/>
        <end position="284"/>
    </location>
</feature>
<feature type="repeat" description="Acidic serine cluster 6" evidence="2">
    <location>
        <begin position="334"/>
        <end position="345"/>
    </location>
</feature>
<feature type="repeat" description="Acidic serine cluster 7" evidence="2">
    <location>
        <begin position="372"/>
        <end position="383"/>
    </location>
</feature>
<feature type="repeat" description="Acidic serine cluster 8" evidence="2">
    <location>
        <begin position="431"/>
        <end position="442"/>
    </location>
</feature>
<feature type="repeat" description="Acidic serine cluster 9" evidence="2">
    <location>
        <begin position="474"/>
        <end position="484"/>
    </location>
</feature>
<feature type="repeat" description="Acidic serine cluster 10" evidence="2">
    <location>
        <begin position="521"/>
        <end position="531"/>
    </location>
</feature>
<feature type="repeat" description="Acidic serine cluster 11" evidence="2">
    <location>
        <begin position="555"/>
        <end position="566"/>
    </location>
</feature>
<feature type="region of interest" description="Disordered" evidence="4">
    <location>
        <begin position="65"/>
        <end position="635"/>
    </location>
</feature>
<feature type="region of interest" description="11 X 12 AA approximate repeats of an acidic serine cluster" evidence="2">
    <location>
        <begin position="85"/>
        <end position="566"/>
    </location>
</feature>
<feature type="region of interest" description="Interaction with RPA194" evidence="2">
    <location>
        <begin position="215"/>
        <end position="390"/>
    </location>
</feature>
<feature type="compositionally biased region" description="Low complexity" evidence="4">
    <location>
        <begin position="123"/>
        <end position="135"/>
    </location>
</feature>
<feature type="compositionally biased region" description="Low complexity" evidence="4">
    <location>
        <begin position="151"/>
        <end position="164"/>
    </location>
</feature>
<feature type="compositionally biased region" description="Acidic residues" evidence="4">
    <location>
        <begin position="172"/>
        <end position="188"/>
    </location>
</feature>
<feature type="compositionally biased region" description="Low complexity" evidence="4">
    <location>
        <begin position="189"/>
        <end position="205"/>
    </location>
</feature>
<feature type="compositionally biased region" description="Low complexity" evidence="4">
    <location>
        <begin position="224"/>
        <end position="235"/>
    </location>
</feature>
<feature type="compositionally biased region" description="Low complexity" evidence="4">
    <location>
        <begin position="245"/>
        <end position="278"/>
    </location>
</feature>
<feature type="compositionally biased region" description="Low complexity" evidence="4">
    <location>
        <begin position="308"/>
        <end position="329"/>
    </location>
</feature>
<feature type="compositionally biased region" description="Acidic residues" evidence="4">
    <location>
        <begin position="330"/>
        <end position="342"/>
    </location>
</feature>
<feature type="compositionally biased region" description="Low complexity" evidence="4">
    <location>
        <begin position="353"/>
        <end position="362"/>
    </location>
</feature>
<feature type="compositionally biased region" description="Polar residues" evidence="4">
    <location>
        <begin position="411"/>
        <end position="422"/>
    </location>
</feature>
<feature type="compositionally biased region" description="Acidic residues" evidence="4">
    <location>
        <begin position="431"/>
        <end position="443"/>
    </location>
</feature>
<feature type="compositionally biased region" description="Low complexity" evidence="4">
    <location>
        <begin position="447"/>
        <end position="480"/>
    </location>
</feature>
<feature type="compositionally biased region" description="Low complexity" evidence="4">
    <location>
        <begin position="514"/>
        <end position="525"/>
    </location>
</feature>
<feature type="compositionally biased region" description="Polar residues" evidence="4">
    <location>
        <begin position="541"/>
        <end position="554"/>
    </location>
</feature>
<feature type="compositionally biased region" description="Acidic residues" evidence="4">
    <location>
        <begin position="563"/>
        <end position="572"/>
    </location>
</feature>
<feature type="modified residue" description="N6-acetyllysine" evidence="15">
    <location>
        <position position="33"/>
    </location>
</feature>
<feature type="modified residue" description="Phosphoserine" evidence="2">
    <location>
        <position position="88"/>
    </location>
</feature>
<feature type="modified residue" description="Diphosphoserine" evidence="7">
    <location>
        <position position="89"/>
    </location>
</feature>
<feature type="modified residue" description="Phosphoserine; by CK2" evidence="7">
    <location>
        <position position="89"/>
    </location>
</feature>
<feature type="modified residue" description="Diphosphoserine" evidence="7">
    <location>
        <position position="92"/>
    </location>
</feature>
<feature type="modified residue" description="Phosphoserine; by CK2" evidence="7">
    <location>
        <position position="92"/>
    </location>
</feature>
<feature type="modified residue" description="Phosphoserine" evidence="2">
    <location>
        <position position="93"/>
    </location>
</feature>
<feature type="modified residue" description="Phosphoserine" evidence="2">
    <location>
        <position position="371"/>
    </location>
</feature>
<feature type="modified residue" description="Phosphoserine" evidence="2">
    <location>
        <position position="372"/>
    </location>
</feature>
<feature type="modified residue" description="Phosphoserine" evidence="2">
    <location>
        <position position="375"/>
    </location>
</feature>
<feature type="modified residue" description="N6-acetyllysine; alternate" evidence="2">
    <location>
        <position position="421"/>
    </location>
</feature>
<feature type="modified residue" description="Phosphoserine" evidence="12 13 14">
    <location>
        <position position="563"/>
    </location>
</feature>
<feature type="modified residue" description="Phosphoserine" evidence="2">
    <location>
        <position position="585"/>
    </location>
</feature>
<feature type="modified residue" description="Phosphothreonine" evidence="14">
    <location>
        <position position="594"/>
    </location>
</feature>
<feature type="modified residue" description="Phosphothreonine" evidence="14">
    <location>
        <position position="610"/>
    </location>
</feature>
<feature type="modified residue" description="Phosphothreonine" evidence="2">
    <location>
        <position position="613"/>
    </location>
</feature>
<feature type="modified residue" description="Phosphoserine" evidence="2">
    <location>
        <position position="625"/>
    </location>
</feature>
<feature type="modified residue" description="Phosphoserine" evidence="13 14">
    <location>
        <position position="646"/>
    </location>
</feature>
<feature type="modified residue" description="N6-acetyllysine; alternate" evidence="15">
    <location>
        <position position="666"/>
    </location>
</feature>
<feature type="modified residue" description="Omega-N-methylarginine" evidence="2">
    <location>
        <position position="686"/>
    </location>
</feature>
<feature type="modified residue" description="Phosphoserine" evidence="14">
    <location>
        <position position="689"/>
    </location>
</feature>
<feature type="modified residue" description="Phosphoserine" evidence="12 13 14">
    <location>
        <position position="701"/>
    </location>
</feature>
<feature type="cross-link" description="Glycyl lysine isopeptide (Lys-Gly) (interchain with G-Cter in SUMO2)" evidence="2">
    <location>
        <position position="68"/>
    </location>
</feature>
<feature type="cross-link" description="Glycyl lysine isopeptide (Lys-Gly) (interchain with G-Cter in SUMO2)" evidence="2">
    <location>
        <position position="77"/>
    </location>
</feature>
<feature type="cross-link" description="Glycyl lysine isopeptide (Lys-Gly) (interchain with G-Cter in SUMO2)" evidence="2">
    <location>
        <position position="195"/>
    </location>
</feature>
<feature type="cross-link" description="Glycyl lysine isopeptide (Lys-Gly) (interchain with G-Cter in SUMO2)" evidence="2">
    <location>
        <position position="201"/>
    </location>
</feature>
<feature type="cross-link" description="Glycyl lysine isopeptide (Lys-Gly) (interchain with G-Cter in SUMO2)" evidence="2">
    <location>
        <position position="351"/>
    </location>
</feature>
<feature type="cross-link" description="Glycyl lysine isopeptide (Lys-Gly) (interchain with G-Cter in SUMO2)" evidence="2">
    <location>
        <position position="356"/>
    </location>
</feature>
<feature type="cross-link" description="Glycyl lysine isopeptide (Lys-Gly) (interchain with G-Cter in SUMO2)" evidence="2">
    <location>
        <position position="396"/>
    </location>
</feature>
<feature type="cross-link" description="Glycyl lysine isopeptide (Lys-Gly) (interchain with G-Cter in SUMO2)" evidence="2">
    <location>
        <position position="402"/>
    </location>
</feature>
<feature type="cross-link" description="Glycyl lysine isopeptide (Lys-Gly) (interchain with G-Cter in SUMO2)" evidence="2">
    <location>
        <position position="407"/>
    </location>
</feature>
<feature type="cross-link" description="Glycyl lysine isopeptide (Lys-Gly) (interchain with G-Cter in SUMO2)" evidence="2">
    <location>
        <position position="413"/>
    </location>
</feature>
<feature type="cross-link" description="Glycyl lysine isopeptide (Lys-Gly) (interchain with G-Cter in SUMO1); alternate" evidence="2">
    <location>
        <position position="421"/>
    </location>
</feature>
<feature type="cross-link" description="Glycyl lysine isopeptide (Lys-Gly) (interchain with G-Cter in SUMO2); alternate" evidence="2">
    <location>
        <position position="421"/>
    </location>
</feature>
<feature type="cross-link" description="Glycyl lysine isopeptide (Lys-Gly) (interchain with G-Cter in SUMO2)" evidence="2">
    <location>
        <position position="447"/>
    </location>
</feature>
<feature type="cross-link" description="Glycyl lysine isopeptide (Lys-Gly) (interchain with G-Cter in SUMO2)" evidence="2">
    <location>
        <position position="459"/>
    </location>
</feature>
<feature type="cross-link" description="Glycyl lysine isopeptide (Lys-Gly) (interchain with G-Cter in SUMO1)" evidence="2">
    <location>
        <position position="575"/>
    </location>
</feature>
<feature type="cross-link" description="Glycyl lysine isopeptide (Lys-Gly) (interchain with G-Cter in SUMO2)" evidence="2">
    <location>
        <position position="582"/>
    </location>
</feature>
<feature type="cross-link" description="Glycyl lysine isopeptide (Lys-Gly) (interchain with G-Cter in SUMO2)" evidence="2">
    <location>
        <position position="607"/>
    </location>
</feature>
<feature type="cross-link" description="Glycyl lysine isopeptide (Lys-Gly) (interchain with G-Cter in SUMO2)" evidence="2">
    <location>
        <position position="616"/>
    </location>
</feature>
<feature type="cross-link" description="Glycyl lysine isopeptide (Lys-Gly) (interchain with G-Cter in SUMO2)" evidence="2">
    <location>
        <position position="650"/>
    </location>
</feature>
<feature type="cross-link" description="Glycyl lysine isopeptide (Lys-Gly) (interchain with G-Cter in SUMO2); alternate" evidence="2">
    <location>
        <position position="666"/>
    </location>
</feature>
<feature type="cross-link" description="Glycyl lysine isopeptide (Lys-Gly) (interchain with G-Cter in SUMO2)" evidence="2">
    <location>
        <position position="698"/>
    </location>
</feature>
<feature type="splice variant" id="VSP_058892" description="In isoform 2.">
    <original>WGERANQV</original>
    <variation>GGSEPIRF</variation>
    <location>
        <begin position="657"/>
        <end position="664"/>
    </location>
</feature>
<feature type="splice variant" id="VSP_058893" description="In isoform 2.">
    <location>
        <begin position="665"/>
        <end position="702"/>
    </location>
</feature>
<feature type="mutagenesis site" description="Strongly reduced pyrophosphorylation." evidence="6">
    <original>KKAKKETSSSDSSEDSSEDEDK</original>
    <variation>AAAAAETSSSDSSEDSSEDEDA</variation>
    <location>
        <begin position="77"/>
        <end position="98"/>
    </location>
</feature>
<feature type="mutagenesis site" description="Does not affect pyrophosphorylation." evidence="7">
    <original>T</original>
    <variation>A</variation>
    <location>
        <position position="83"/>
    </location>
</feature>
<feature type="mutagenesis site" description="Abolished pyrophosphorylation." evidence="6">
    <original>SSSDSS</original>
    <variation>AAADAA</variation>
    <location>
        <begin position="84"/>
        <end position="89"/>
    </location>
</feature>
<feature type="mutagenesis site" description="Strongly reduced pyrophosphorylation." evidence="6">
    <original>DSSEDSSEDED</original>
    <variation>NSSQNSSQQQN</variation>
    <location>
        <begin position="87"/>
        <end position="97"/>
    </location>
</feature>
<feature type="sequence conflict" description="In Ref. 1; BAC26327/BAE27690/BAE31612/BAE29474/BAE30048." evidence="10" ref="1">
    <original>NR</original>
    <variation>K</variation>
    <location>
        <begin position="59"/>
        <end position="60"/>
    </location>
</feature>
<feature type="sequence conflict" description="In Ref. 1; BAE38994/BAC26327/BAE31612/BAE29474/BAE30048." evidence="10" ref="1">
    <location>
        <position position="151"/>
    </location>
</feature>
<feature type="sequence conflict" description="In Ref. 3; BAC97850." evidence="10" ref="3">
    <original>A</original>
    <variation>ASSS</variation>
    <location>
        <position position="227"/>
    </location>
</feature>
<feature type="sequence conflict" description="In Ref. 1; BAE31612/BAE29474/BAE30048." evidence="10" ref="1">
    <original>P</original>
    <variation>T</variation>
    <location>
        <position position="489"/>
    </location>
</feature>
<feature type="sequence conflict" description="In Ref. 3; BAC97850." evidence="10" ref="3">
    <original>KS</original>
    <variation>E</variation>
    <location>
        <begin position="514"/>
        <end position="515"/>
    </location>
</feature>
<feature type="sequence conflict" description="In Ref. 1; BAE31612." evidence="10" ref="1">
    <original>W</original>
    <variation>R</variation>
    <location>
        <position position="657"/>
    </location>
</feature>
<sequence>MADTGLRRVVPSDLYPLVLRFLRDSQLSEVASKFAKATGATQQDANASSLLDIYSFWLNRSTKAPKVKLQSNGPVTKKAKKETSSSDSSEDSSEDEDKKAQGLPTQKAAAQVKRASVPQHAGKAAAKASESSSSEESSEEEEEDKKKKPVQQKAAKPQAKAVRPPAKKAESSESDSDSDSDSSSEEETPQTQKPKAAVAAKAQTKAEAKPGTPAKAQPKVANGKAAASSSSSSSSDDSEEEKKAAAPPKKTVPKKQVVAKAPVKVAAAPTQKSSSSEDSSSEEEEGQRQPMKKKAGPYSSVPPPSVPLPKKSPGTQAPKKAAAQTQPADSSDDSSDDSDSSSEEEKKPPAKTVVSKTPAKAAPVKKKAESSSDSSDSDSSEDEAPAKPVSTTKSPKPAVTPKPSAAKAVTTPKQPAGSNQKPQSRKADSSSSEEESSSSEEEEASKKSATTPKAKVTAKAAPAKQAPQAAGDSSSDSDSSSSEEEEKTPKPPAKKKAAGGAVSTPAPGKKAEAKSSSSSSSSSSEDSSEEEKKKKPKATTPKIQASKANGTPASLNGKAAKESEEEEEEEETEEKKKAAGTKPGSGKKRKQNETADEATTPQAKKVKLETPNTFPKRKKGERRASSPFRRVREEEIEVDSRVADNSFDAKRGAAGDWGERANQVLKFTKGKSFRHEKTKKKRGSYRGGSISVQVNSVKFDSE</sequence>